<comment type="function">
    <text evidence="1">Catalyzes the reversible conversion of 2-phosphoglycerate (2-PG) into phosphoenolpyruvate (PEP). It is essential for the degradation of carbohydrates via glycolysis.</text>
</comment>
<comment type="catalytic activity">
    <reaction evidence="1">
        <text>(2R)-2-phosphoglycerate = phosphoenolpyruvate + H2O</text>
        <dbReference type="Rhea" id="RHEA:10164"/>
        <dbReference type="ChEBI" id="CHEBI:15377"/>
        <dbReference type="ChEBI" id="CHEBI:58289"/>
        <dbReference type="ChEBI" id="CHEBI:58702"/>
        <dbReference type="EC" id="4.2.1.11"/>
    </reaction>
</comment>
<comment type="cofactor">
    <cofactor evidence="1">
        <name>Mg(2+)</name>
        <dbReference type="ChEBI" id="CHEBI:18420"/>
    </cofactor>
    <text evidence="1">Binds a second Mg(2+) ion via substrate during catalysis.</text>
</comment>
<comment type="pathway">
    <text evidence="1">Carbohydrate degradation; glycolysis; pyruvate from D-glyceraldehyde 3-phosphate: step 4/5.</text>
</comment>
<comment type="subunit">
    <text evidence="1">Component of the RNA degradosome, a multiprotein complex involved in RNA processing and mRNA degradation.</text>
</comment>
<comment type="subcellular location">
    <subcellularLocation>
        <location evidence="1">Cytoplasm</location>
    </subcellularLocation>
    <subcellularLocation>
        <location evidence="1">Secreted</location>
    </subcellularLocation>
    <subcellularLocation>
        <location evidence="1">Cell surface</location>
    </subcellularLocation>
    <text evidence="1">Fractions of enolase are present in both the cytoplasm and on the cell surface.</text>
</comment>
<comment type="similarity">
    <text evidence="1">Belongs to the enolase family.</text>
</comment>
<gene>
    <name evidence="1" type="primary">eno</name>
    <name type="ordered locus">ECS88_3047</name>
</gene>
<name>ENO_ECO45</name>
<accession>B7MLA0</accession>
<keyword id="KW-0963">Cytoplasm</keyword>
<keyword id="KW-0324">Glycolysis</keyword>
<keyword id="KW-0456">Lyase</keyword>
<keyword id="KW-0460">Magnesium</keyword>
<keyword id="KW-0479">Metal-binding</keyword>
<keyword id="KW-1185">Reference proteome</keyword>
<keyword id="KW-0964">Secreted</keyword>
<proteinExistence type="inferred from homology"/>
<sequence length="432" mass="45655">MSKIVKIIGREIIDSRGNPTVEAEVHLEGGFVGMAAAPSGASTGSREALELRDGDKSRFLGKGVTKAVAAVNGPIAQALIGKDAKDQAGIDKIMIDLDGTENKSKFGANAILAVSLANAKAAAAAKGMPLYEHIAELNGTPGKYSMPVPMMNIINGGEHADNNVDIQEFMIQPVGAKTVKEAIRMGSEVFHHLAKVLKAKGMNTAVGDEGGYAPNLGSNAEALAVIAEAVKAAGYELGKDITLAMDCAASEFYKDGKYVLAGEGNKAFTSEEFTHFLEELTKQYPIVSIEDGLDESDWDGFAYQTKVLGDKIQLVGDDLFVTNTKILKEGIEKGIANSILIKFNQIGSLTETLAAIKMAKDAGYTAVISHRSGETEDATIADLAVGTAAGQIKTGSMSRSDRVAKYNQLIRIEEALGEKAPYNGRKEIKGQA</sequence>
<dbReference type="EC" id="4.2.1.11" evidence="1"/>
<dbReference type="EMBL" id="CU928161">
    <property type="protein sequence ID" value="CAR04289.1"/>
    <property type="molecule type" value="Genomic_DNA"/>
</dbReference>
<dbReference type="RefSeq" id="WP_000036723.1">
    <property type="nucleotide sequence ID" value="NC_011742.1"/>
</dbReference>
<dbReference type="SMR" id="B7MLA0"/>
<dbReference type="GeneID" id="93779219"/>
<dbReference type="KEGG" id="ecz:ECS88_3047"/>
<dbReference type="HOGENOM" id="CLU_031223_2_1_6"/>
<dbReference type="UniPathway" id="UPA00109">
    <property type="reaction ID" value="UER00187"/>
</dbReference>
<dbReference type="Proteomes" id="UP000000747">
    <property type="component" value="Chromosome"/>
</dbReference>
<dbReference type="GO" id="GO:0009986">
    <property type="term" value="C:cell surface"/>
    <property type="evidence" value="ECO:0007669"/>
    <property type="project" value="UniProtKB-SubCell"/>
</dbReference>
<dbReference type="GO" id="GO:0005576">
    <property type="term" value="C:extracellular region"/>
    <property type="evidence" value="ECO:0007669"/>
    <property type="project" value="UniProtKB-SubCell"/>
</dbReference>
<dbReference type="GO" id="GO:0000015">
    <property type="term" value="C:phosphopyruvate hydratase complex"/>
    <property type="evidence" value="ECO:0007669"/>
    <property type="project" value="InterPro"/>
</dbReference>
<dbReference type="GO" id="GO:0000287">
    <property type="term" value="F:magnesium ion binding"/>
    <property type="evidence" value="ECO:0007669"/>
    <property type="project" value="UniProtKB-UniRule"/>
</dbReference>
<dbReference type="GO" id="GO:0004634">
    <property type="term" value="F:phosphopyruvate hydratase activity"/>
    <property type="evidence" value="ECO:0007669"/>
    <property type="project" value="UniProtKB-UniRule"/>
</dbReference>
<dbReference type="GO" id="GO:0006096">
    <property type="term" value="P:glycolytic process"/>
    <property type="evidence" value="ECO:0007669"/>
    <property type="project" value="UniProtKB-UniRule"/>
</dbReference>
<dbReference type="CDD" id="cd03313">
    <property type="entry name" value="enolase"/>
    <property type="match status" value="1"/>
</dbReference>
<dbReference type="FunFam" id="3.20.20.120:FF:000001">
    <property type="entry name" value="Enolase"/>
    <property type="match status" value="1"/>
</dbReference>
<dbReference type="FunFam" id="3.30.390.10:FF:000001">
    <property type="entry name" value="Enolase"/>
    <property type="match status" value="1"/>
</dbReference>
<dbReference type="Gene3D" id="3.20.20.120">
    <property type="entry name" value="Enolase-like C-terminal domain"/>
    <property type="match status" value="1"/>
</dbReference>
<dbReference type="Gene3D" id="3.30.390.10">
    <property type="entry name" value="Enolase-like, N-terminal domain"/>
    <property type="match status" value="1"/>
</dbReference>
<dbReference type="HAMAP" id="MF_00318">
    <property type="entry name" value="Enolase"/>
    <property type="match status" value="1"/>
</dbReference>
<dbReference type="InterPro" id="IPR000941">
    <property type="entry name" value="Enolase"/>
</dbReference>
<dbReference type="InterPro" id="IPR036849">
    <property type="entry name" value="Enolase-like_C_sf"/>
</dbReference>
<dbReference type="InterPro" id="IPR029017">
    <property type="entry name" value="Enolase-like_N"/>
</dbReference>
<dbReference type="InterPro" id="IPR020810">
    <property type="entry name" value="Enolase_C"/>
</dbReference>
<dbReference type="InterPro" id="IPR020809">
    <property type="entry name" value="Enolase_CS"/>
</dbReference>
<dbReference type="InterPro" id="IPR020811">
    <property type="entry name" value="Enolase_N"/>
</dbReference>
<dbReference type="NCBIfam" id="TIGR01060">
    <property type="entry name" value="eno"/>
    <property type="match status" value="1"/>
</dbReference>
<dbReference type="PANTHER" id="PTHR11902">
    <property type="entry name" value="ENOLASE"/>
    <property type="match status" value="1"/>
</dbReference>
<dbReference type="PANTHER" id="PTHR11902:SF1">
    <property type="entry name" value="ENOLASE"/>
    <property type="match status" value="1"/>
</dbReference>
<dbReference type="Pfam" id="PF00113">
    <property type="entry name" value="Enolase_C"/>
    <property type="match status" value="1"/>
</dbReference>
<dbReference type="Pfam" id="PF03952">
    <property type="entry name" value="Enolase_N"/>
    <property type="match status" value="1"/>
</dbReference>
<dbReference type="PIRSF" id="PIRSF001400">
    <property type="entry name" value="Enolase"/>
    <property type="match status" value="1"/>
</dbReference>
<dbReference type="PRINTS" id="PR00148">
    <property type="entry name" value="ENOLASE"/>
</dbReference>
<dbReference type="SFLD" id="SFLDS00001">
    <property type="entry name" value="Enolase"/>
    <property type="match status" value="1"/>
</dbReference>
<dbReference type="SFLD" id="SFLDF00002">
    <property type="entry name" value="enolase"/>
    <property type="match status" value="1"/>
</dbReference>
<dbReference type="SMART" id="SM01192">
    <property type="entry name" value="Enolase_C"/>
    <property type="match status" value="1"/>
</dbReference>
<dbReference type="SMART" id="SM01193">
    <property type="entry name" value="Enolase_N"/>
    <property type="match status" value="1"/>
</dbReference>
<dbReference type="SUPFAM" id="SSF51604">
    <property type="entry name" value="Enolase C-terminal domain-like"/>
    <property type="match status" value="1"/>
</dbReference>
<dbReference type="SUPFAM" id="SSF54826">
    <property type="entry name" value="Enolase N-terminal domain-like"/>
    <property type="match status" value="1"/>
</dbReference>
<dbReference type="PROSITE" id="PS00164">
    <property type="entry name" value="ENOLASE"/>
    <property type="match status" value="1"/>
</dbReference>
<reference key="1">
    <citation type="journal article" date="2009" name="PLoS Genet.">
        <title>Organised genome dynamics in the Escherichia coli species results in highly diverse adaptive paths.</title>
        <authorList>
            <person name="Touchon M."/>
            <person name="Hoede C."/>
            <person name="Tenaillon O."/>
            <person name="Barbe V."/>
            <person name="Baeriswyl S."/>
            <person name="Bidet P."/>
            <person name="Bingen E."/>
            <person name="Bonacorsi S."/>
            <person name="Bouchier C."/>
            <person name="Bouvet O."/>
            <person name="Calteau A."/>
            <person name="Chiapello H."/>
            <person name="Clermont O."/>
            <person name="Cruveiller S."/>
            <person name="Danchin A."/>
            <person name="Diard M."/>
            <person name="Dossat C."/>
            <person name="Karoui M.E."/>
            <person name="Frapy E."/>
            <person name="Garry L."/>
            <person name="Ghigo J.M."/>
            <person name="Gilles A.M."/>
            <person name="Johnson J."/>
            <person name="Le Bouguenec C."/>
            <person name="Lescat M."/>
            <person name="Mangenot S."/>
            <person name="Martinez-Jehanne V."/>
            <person name="Matic I."/>
            <person name="Nassif X."/>
            <person name="Oztas S."/>
            <person name="Petit M.A."/>
            <person name="Pichon C."/>
            <person name="Rouy Z."/>
            <person name="Ruf C.S."/>
            <person name="Schneider D."/>
            <person name="Tourret J."/>
            <person name="Vacherie B."/>
            <person name="Vallenet D."/>
            <person name="Medigue C."/>
            <person name="Rocha E.P.C."/>
            <person name="Denamur E."/>
        </authorList>
    </citation>
    <scope>NUCLEOTIDE SEQUENCE [LARGE SCALE GENOMIC DNA]</scope>
    <source>
        <strain>S88 / ExPEC</strain>
    </source>
</reference>
<organism>
    <name type="scientific">Escherichia coli O45:K1 (strain S88 / ExPEC)</name>
    <dbReference type="NCBI Taxonomy" id="585035"/>
    <lineage>
        <taxon>Bacteria</taxon>
        <taxon>Pseudomonadati</taxon>
        <taxon>Pseudomonadota</taxon>
        <taxon>Gammaproteobacteria</taxon>
        <taxon>Enterobacterales</taxon>
        <taxon>Enterobacteriaceae</taxon>
        <taxon>Escherichia</taxon>
    </lineage>
</organism>
<feature type="chain" id="PRO_1000119572" description="Enolase">
    <location>
        <begin position="1"/>
        <end position="432"/>
    </location>
</feature>
<feature type="active site" description="Proton donor" evidence="1">
    <location>
        <position position="209"/>
    </location>
</feature>
<feature type="active site" description="Proton acceptor" evidence="1">
    <location>
        <position position="342"/>
    </location>
</feature>
<feature type="binding site" evidence="1">
    <location>
        <position position="167"/>
    </location>
    <ligand>
        <name>(2R)-2-phosphoglycerate</name>
        <dbReference type="ChEBI" id="CHEBI:58289"/>
    </ligand>
</feature>
<feature type="binding site" evidence="1">
    <location>
        <position position="246"/>
    </location>
    <ligand>
        <name>Mg(2+)</name>
        <dbReference type="ChEBI" id="CHEBI:18420"/>
    </ligand>
</feature>
<feature type="binding site" evidence="1">
    <location>
        <position position="290"/>
    </location>
    <ligand>
        <name>Mg(2+)</name>
        <dbReference type="ChEBI" id="CHEBI:18420"/>
    </ligand>
</feature>
<feature type="binding site" evidence="1">
    <location>
        <position position="317"/>
    </location>
    <ligand>
        <name>Mg(2+)</name>
        <dbReference type="ChEBI" id="CHEBI:18420"/>
    </ligand>
</feature>
<feature type="binding site" evidence="1">
    <location>
        <position position="342"/>
    </location>
    <ligand>
        <name>(2R)-2-phosphoglycerate</name>
        <dbReference type="ChEBI" id="CHEBI:58289"/>
    </ligand>
</feature>
<feature type="binding site" evidence="1">
    <location>
        <position position="371"/>
    </location>
    <ligand>
        <name>(2R)-2-phosphoglycerate</name>
        <dbReference type="ChEBI" id="CHEBI:58289"/>
    </ligand>
</feature>
<feature type="binding site" evidence="1">
    <location>
        <position position="372"/>
    </location>
    <ligand>
        <name>(2R)-2-phosphoglycerate</name>
        <dbReference type="ChEBI" id="CHEBI:58289"/>
    </ligand>
</feature>
<feature type="binding site" evidence="1">
    <location>
        <position position="393"/>
    </location>
    <ligand>
        <name>(2R)-2-phosphoglycerate</name>
        <dbReference type="ChEBI" id="CHEBI:58289"/>
    </ligand>
</feature>
<evidence type="ECO:0000255" key="1">
    <source>
        <dbReference type="HAMAP-Rule" id="MF_00318"/>
    </source>
</evidence>
<protein>
    <recommendedName>
        <fullName evidence="1">Enolase</fullName>
        <ecNumber evidence="1">4.2.1.11</ecNumber>
    </recommendedName>
    <alternativeName>
        <fullName evidence="1">2-phospho-D-glycerate hydro-lyase</fullName>
    </alternativeName>
    <alternativeName>
        <fullName evidence="1">2-phosphoglycerate dehydratase</fullName>
    </alternativeName>
</protein>